<evidence type="ECO:0000250" key="1">
    <source>
        <dbReference type="UniProtKB" id="W8FLH9"/>
    </source>
</evidence>
<evidence type="ECO:0000255" key="2"/>
<evidence type="ECO:0000269" key="3">
    <source>
    </source>
</evidence>
<evidence type="ECO:0000269" key="4">
    <source>
    </source>
</evidence>
<evidence type="ECO:0000303" key="5">
    <source>
    </source>
</evidence>
<evidence type="ECO:0000303" key="6">
    <source>
    </source>
</evidence>
<evidence type="ECO:0000305" key="7"/>
<evidence type="ECO:0000305" key="8">
    <source>
    </source>
</evidence>
<evidence type="ECO:0000312" key="9">
    <source>
        <dbReference type="EMBL" id="AAF96171.1"/>
    </source>
</evidence>
<evidence type="ECO:0000312" key="10">
    <source>
        <dbReference type="EMBL" id="AAF96172.1"/>
    </source>
</evidence>
<organism>
    <name type="scientific">Vibrio cholerae serotype O1 (strain ATCC 39315 / El Tor Inaba N16961)</name>
    <dbReference type="NCBI Taxonomy" id="243277"/>
    <lineage>
        <taxon>Bacteria</taxon>
        <taxon>Pseudomonadati</taxon>
        <taxon>Pseudomonadota</taxon>
        <taxon>Gammaproteobacteria</taxon>
        <taxon>Vibrionales</taxon>
        <taxon>Vibrionaceae</taxon>
        <taxon>Vibrio</taxon>
    </lineage>
</organism>
<accession>Q9KMQ9</accession>
<accession>Q9KMR0</accession>
<name>COPI_VIBCH</name>
<feature type="signal peptide" evidence="2">
    <location>
        <begin position="1"/>
        <end position="20"/>
    </location>
</feature>
<feature type="chain" id="PRO_5004332849" description="Copper-resistant cuproprotein CopI">
    <location>
        <begin position="21"/>
        <end position="169"/>
    </location>
</feature>
<feature type="binding site" evidence="1">
    <location>
        <position position="98"/>
    </location>
    <ligand>
        <name>Cu(2+)</name>
        <dbReference type="ChEBI" id="CHEBI:29036"/>
    </ligand>
</feature>
<feature type="binding site" evidence="1">
    <location>
        <position position="153"/>
    </location>
    <ligand>
        <name>Cu(2+)</name>
        <dbReference type="ChEBI" id="CHEBI:29036"/>
    </ligand>
</feature>
<feature type="binding site" evidence="1">
    <location>
        <position position="158"/>
    </location>
    <ligand>
        <name>Cu(2+)</name>
        <dbReference type="ChEBI" id="CHEBI:29036"/>
    </ligand>
</feature>
<feature type="binding site" evidence="1">
    <location>
        <position position="163"/>
    </location>
    <ligand>
        <name>Cu(2+)</name>
        <dbReference type="ChEBI" id="CHEBI:29036"/>
    </ligand>
</feature>
<gene>
    <name evidence="6" type="primary">copI</name>
    <name evidence="5" type="synonym">cot</name>
    <name evidence="9 10" type="ordered locus">VC_A0261/VC_A0260</name>
</gene>
<comment type="function">
    <text evidence="3 4">Involved in copper tolerance (PubMed:22653946, PubMed:34791351). Mediates copper tolerance in aerobiosis (PubMed:22653946). May also mediate tolerance under anaerobiosis (PubMed:22653946). Not required for virulence or colonization in the mouse model (PubMed:22653946).</text>
</comment>
<comment type="subcellular location">
    <subcellularLocation>
        <location evidence="3">Periplasm</location>
    </subcellularLocation>
</comment>
<comment type="induction">
    <text evidence="3 4">Induced by copper via the HTH-type transcriptional regulator CueR under aerobic and anaerobic conditions (PubMed:22653946). Expressed under both aerobic and microaerobic conditions, the amount increasing with increasing copper concentration (PubMed:34791351). Nevertheless, under low copper stress, expression is much lower under aerobiosis than under microaerobiosis (PubMed:34791351).</text>
</comment>
<comment type="disruption phenotype">
    <text evidence="3">Mutant shows decreased copper tolerance under aerobic growth.</text>
</comment>
<comment type="miscellaneous">
    <text evidence="4">Restores the copper-resistant phenotype in the R.gelatinosus deletion mutant under anaerobiosis.</text>
</comment>
<comment type="similarity">
    <text evidence="7">Belongs to the CopI family.</text>
</comment>
<comment type="sequence caution" evidence="8">
    <conflict type="frameshift">
        <sequence resource="EMBL-CDS" id="AAF96171"/>
    </conflict>
    <text>Was originally thought to correspond to two different genes VC_A0261 and VC_A0260.</text>
</comment>
<comment type="sequence caution" evidence="8">
    <conflict type="frameshift">
        <sequence resource="EMBL-CDS" id="AAF96172"/>
    </conflict>
    <text>Was originally thought to correspond to two different genes VC_A0261 and VC_A0260.</text>
</comment>
<proteinExistence type="evidence at transcript level"/>
<dbReference type="EMBL" id="AY972867">
    <property type="status" value="NOT_ANNOTATED_CDS"/>
    <property type="molecule type" value="Genomic_DNA"/>
</dbReference>
<dbReference type="EMBL" id="AE003853">
    <property type="protein sequence ID" value="AAF96172.1"/>
    <property type="status" value="ALT_FRAME"/>
    <property type="molecule type" value="Genomic_DNA"/>
</dbReference>
<dbReference type="EMBL" id="AE003853">
    <property type="protein sequence ID" value="AAF96171.1"/>
    <property type="status" value="ALT_FRAME"/>
    <property type="molecule type" value="Genomic_DNA"/>
</dbReference>
<dbReference type="PIR" id="F82480">
    <property type="entry name" value="F82480"/>
</dbReference>
<dbReference type="RefSeq" id="WP_000592762.1">
    <property type="nucleotide sequence ID" value="NZ_LT906615.1"/>
</dbReference>
<dbReference type="SMR" id="Q9KMQ9"/>
<dbReference type="STRING" id="243277.VC_A0260"/>
<dbReference type="EnsemblBacteria" id="AAF96171">
    <property type="protein sequence ID" value="AAF96171"/>
    <property type="gene ID" value="VC_A0260"/>
</dbReference>
<dbReference type="EnsemblBacteria" id="AAF96172">
    <property type="protein sequence ID" value="AAF96172"/>
    <property type="gene ID" value="VC_A0261"/>
</dbReference>
<dbReference type="KEGG" id="vch:VC_A0260"/>
<dbReference type="KEGG" id="vch:VC_A0261"/>
<dbReference type="eggNOG" id="COG4454">
    <property type="taxonomic scope" value="Bacteria"/>
</dbReference>
<dbReference type="HOGENOM" id="CLU_174902_0_0_6"/>
<dbReference type="Proteomes" id="UP000000584">
    <property type="component" value="Chromosome 2"/>
</dbReference>
<dbReference type="GO" id="GO:0042597">
    <property type="term" value="C:periplasmic space"/>
    <property type="evidence" value="ECO:0007669"/>
    <property type="project" value="UniProtKB-SubCell"/>
</dbReference>
<dbReference type="GO" id="GO:0046872">
    <property type="term" value="F:metal ion binding"/>
    <property type="evidence" value="ECO:0007669"/>
    <property type="project" value="UniProtKB-KW"/>
</dbReference>
<dbReference type="CDD" id="cd04211">
    <property type="entry name" value="Cupredoxin_like_2"/>
    <property type="match status" value="1"/>
</dbReference>
<dbReference type="Gene3D" id="2.60.40.420">
    <property type="entry name" value="Cupredoxins - blue copper proteins"/>
    <property type="match status" value="1"/>
</dbReference>
<dbReference type="InterPro" id="IPR050845">
    <property type="entry name" value="Cu-binding_ET"/>
</dbReference>
<dbReference type="InterPro" id="IPR008972">
    <property type="entry name" value="Cupredoxin"/>
</dbReference>
<dbReference type="PANTHER" id="PTHR38439">
    <property type="entry name" value="AURACYANIN-B"/>
    <property type="match status" value="1"/>
</dbReference>
<dbReference type="PANTHER" id="PTHR38439:SF3">
    <property type="entry name" value="COPPER-RESISTANT CUPROPROTEIN COPI"/>
    <property type="match status" value="1"/>
</dbReference>
<dbReference type="SUPFAM" id="SSF49503">
    <property type="entry name" value="Cupredoxins"/>
    <property type="match status" value="1"/>
</dbReference>
<keyword id="KW-0186">Copper</keyword>
<keyword id="KW-0479">Metal-binding</keyword>
<keyword id="KW-0574">Periplasm</keyword>
<keyword id="KW-1185">Reference proteome</keyword>
<keyword id="KW-0732">Signal</keyword>
<protein>
    <recommendedName>
        <fullName evidence="6">Copper-resistant cuproprotein CopI</fullName>
    </recommendedName>
</protein>
<reference key="1">
    <citation type="journal article" date="2012" name="Microbiology">
        <title>Periplasmic proteins encoded by VCA0261-0260 and VC2216 genes together with copA and cueR products are required for copper tolerance but not for virulence in Vibrio cholerae.</title>
        <authorList>
            <person name="Marrero K."/>
            <person name="Sanchez A."/>
            <person name="Gonzalez L.J."/>
            <person name="Ledon T."/>
            <person name="Rodriguez-Ulloa A."/>
            <person name="Castellanos-Serra L."/>
            <person name="Perez C."/>
            <person name="Fando R."/>
        </authorList>
    </citation>
    <scope>NUCLEOTIDE SEQUENCE [GENOMIC DNA]</scope>
    <scope>IDENTIFICATION OF FRAMESHIFT</scope>
    <scope>FUNCTION</scope>
    <scope>SUBCELLULAR LOCATION</scope>
    <scope>INDUCTION</scope>
    <scope>DISRUPTION PHENOTYPE</scope>
    <source>
        <strain>ATCC 39315 / El Tor Inaba N16961</strain>
        <strain>El Tor C7258 / Serotype O1</strain>
    </source>
</reference>
<reference key="2">
    <citation type="journal article" date="2000" name="Nature">
        <title>DNA sequence of both chromosomes of the cholera pathogen Vibrio cholerae.</title>
        <authorList>
            <person name="Heidelberg J.F."/>
            <person name="Eisen J.A."/>
            <person name="Nelson W.C."/>
            <person name="Clayton R.A."/>
            <person name="Gwinn M.L."/>
            <person name="Dodson R.J."/>
            <person name="Haft D.H."/>
            <person name="Hickey E.K."/>
            <person name="Peterson J.D."/>
            <person name="Umayam L.A."/>
            <person name="Gill S.R."/>
            <person name="Nelson K.E."/>
            <person name="Read T.D."/>
            <person name="Tettelin H."/>
            <person name="Richardson D.L."/>
            <person name="Ermolaeva M.D."/>
            <person name="Vamathevan J.J."/>
            <person name="Bass S."/>
            <person name="Qin H."/>
            <person name="Dragoi I."/>
            <person name="Sellers P."/>
            <person name="McDonald L.A."/>
            <person name="Utterback T.R."/>
            <person name="Fleischmann R.D."/>
            <person name="Nierman W.C."/>
            <person name="White O."/>
            <person name="Salzberg S.L."/>
            <person name="Smith H.O."/>
            <person name="Colwell R.R."/>
            <person name="Mekalanos J.J."/>
            <person name="Venter J.C."/>
            <person name="Fraser C.M."/>
        </authorList>
    </citation>
    <scope>NUCLEOTIDE SEQUENCE [LARGE SCALE GENOMIC DNA]</scope>
    <source>
        <strain>ATCC 39315 / El Tor Inaba N16961</strain>
    </source>
</reference>
<reference key="3">
    <citation type="journal article" date="2021" name="Metallomics">
        <title>A periplasmic cupredoxin with a green CuT1.5 center is involved in bacterial copper tolerance.</title>
        <authorList>
            <person name="Durand A."/>
            <person name="Fouesnard M."/>
            <person name="Bourbon M.L."/>
            <person name="Steunou A.S."/>
            <person name="Lojou E."/>
            <person name="Dorlet P."/>
            <person name="Ouchane S."/>
        </authorList>
    </citation>
    <scope>FUNCTION</scope>
    <scope>INDUCTION</scope>
    <source>
        <strain>El Tor C6706 / Serotype O1</strain>
    </source>
</reference>
<sequence>MIKKTLLVIALTFTVTTAFAHSMDHSKMDHGAMPMDHSQMMGMEGMSDVGMPAPGAKANKVVHVILSDDMKITFKKDVTIEPNDVVQFVVMNTGKIDHEFSIGSAVEQLKHREMMRQMGNHEHDSGSTVTVKPGKTKELLWHFQGDNKVEFACNIPGHAEAGMVKSIEL</sequence>